<organism>
    <name type="scientific">Bacillus cereus (strain ZK / E33L)</name>
    <dbReference type="NCBI Taxonomy" id="288681"/>
    <lineage>
        <taxon>Bacteria</taxon>
        <taxon>Bacillati</taxon>
        <taxon>Bacillota</taxon>
        <taxon>Bacilli</taxon>
        <taxon>Bacillales</taxon>
        <taxon>Bacillaceae</taxon>
        <taxon>Bacillus</taxon>
        <taxon>Bacillus cereus group</taxon>
    </lineage>
</organism>
<name>AZOR1_BACCZ</name>
<comment type="function">
    <text evidence="1">Quinone reductase that provides resistance to thiol-specific stress caused by electrophilic quinones.</text>
</comment>
<comment type="function">
    <text evidence="1">Also exhibits azoreductase activity. Catalyzes the reductive cleavage of the azo bond in aromatic azo compounds to the corresponding amines.</text>
</comment>
<comment type="catalytic activity">
    <reaction evidence="1">
        <text>2 a quinone + NADH + H(+) = 2 a 1,4-benzosemiquinone + NAD(+)</text>
        <dbReference type="Rhea" id="RHEA:65952"/>
        <dbReference type="ChEBI" id="CHEBI:15378"/>
        <dbReference type="ChEBI" id="CHEBI:57540"/>
        <dbReference type="ChEBI" id="CHEBI:57945"/>
        <dbReference type="ChEBI" id="CHEBI:132124"/>
        <dbReference type="ChEBI" id="CHEBI:134225"/>
    </reaction>
</comment>
<comment type="catalytic activity">
    <reaction evidence="1">
        <text>N,N-dimethyl-1,4-phenylenediamine + anthranilate + 2 NAD(+) = 2-(4-dimethylaminophenyl)diazenylbenzoate + 2 NADH + 2 H(+)</text>
        <dbReference type="Rhea" id="RHEA:55872"/>
        <dbReference type="ChEBI" id="CHEBI:15378"/>
        <dbReference type="ChEBI" id="CHEBI:15783"/>
        <dbReference type="ChEBI" id="CHEBI:16567"/>
        <dbReference type="ChEBI" id="CHEBI:57540"/>
        <dbReference type="ChEBI" id="CHEBI:57945"/>
        <dbReference type="ChEBI" id="CHEBI:71579"/>
        <dbReference type="EC" id="1.7.1.17"/>
    </reaction>
</comment>
<comment type="cofactor">
    <cofactor evidence="1">
        <name>FMN</name>
        <dbReference type="ChEBI" id="CHEBI:58210"/>
    </cofactor>
    <text evidence="1">Binds 1 FMN per subunit.</text>
</comment>
<comment type="subunit">
    <text evidence="1">Homodimer.</text>
</comment>
<comment type="similarity">
    <text evidence="1">Belongs to the azoreductase type 1 family.</text>
</comment>
<gene>
    <name evidence="1" type="primary">azoR1</name>
    <name type="ordered locus">BCE33L0871</name>
</gene>
<protein>
    <recommendedName>
        <fullName evidence="1">FMN-dependent NADH:quinone oxidoreductase 1</fullName>
        <ecNumber evidence="1">1.6.5.-</ecNumber>
    </recommendedName>
    <alternativeName>
        <fullName evidence="1">Azo-dye reductase 1</fullName>
    </alternativeName>
    <alternativeName>
        <fullName evidence="1">FMN-dependent NADH-azo compound oxidoreductase 1</fullName>
    </alternativeName>
    <alternativeName>
        <fullName evidence="1">FMN-dependent NADH-azoreductase 1</fullName>
        <ecNumber evidence="1">1.7.1.17</ecNumber>
    </alternativeName>
</protein>
<feature type="chain" id="PRO_0000245884" description="FMN-dependent NADH:quinone oxidoreductase 1">
    <location>
        <begin position="1"/>
        <end position="213"/>
    </location>
</feature>
<feature type="binding site" evidence="1">
    <location>
        <begin position="18"/>
        <end position="20"/>
    </location>
    <ligand>
        <name>FMN</name>
        <dbReference type="ChEBI" id="CHEBI:58210"/>
    </ligand>
</feature>
<proteinExistence type="inferred from homology"/>
<accession>Q63F37</accession>
<keyword id="KW-0285">Flavoprotein</keyword>
<keyword id="KW-0288">FMN</keyword>
<keyword id="KW-0520">NAD</keyword>
<keyword id="KW-0560">Oxidoreductase</keyword>
<dbReference type="EC" id="1.6.5.-" evidence="1"/>
<dbReference type="EC" id="1.7.1.17" evidence="1"/>
<dbReference type="EMBL" id="CP000001">
    <property type="protein sequence ID" value="AAU19372.1"/>
    <property type="molecule type" value="Genomic_DNA"/>
</dbReference>
<dbReference type="RefSeq" id="WP_001044347.1">
    <property type="nucleotide sequence ID" value="NC_006274.1"/>
</dbReference>
<dbReference type="SMR" id="Q63F37"/>
<dbReference type="KEGG" id="bcz:BCE33L0871"/>
<dbReference type="PATRIC" id="fig|288681.22.peg.4704"/>
<dbReference type="Proteomes" id="UP000002612">
    <property type="component" value="Chromosome"/>
</dbReference>
<dbReference type="GO" id="GO:0009055">
    <property type="term" value="F:electron transfer activity"/>
    <property type="evidence" value="ECO:0007669"/>
    <property type="project" value="UniProtKB-UniRule"/>
</dbReference>
<dbReference type="GO" id="GO:0010181">
    <property type="term" value="F:FMN binding"/>
    <property type="evidence" value="ECO:0007669"/>
    <property type="project" value="UniProtKB-UniRule"/>
</dbReference>
<dbReference type="GO" id="GO:0016652">
    <property type="term" value="F:oxidoreductase activity, acting on NAD(P)H as acceptor"/>
    <property type="evidence" value="ECO:0007669"/>
    <property type="project" value="UniProtKB-UniRule"/>
</dbReference>
<dbReference type="GO" id="GO:0016655">
    <property type="term" value="F:oxidoreductase activity, acting on NAD(P)H, quinone or similar compound as acceptor"/>
    <property type="evidence" value="ECO:0007669"/>
    <property type="project" value="InterPro"/>
</dbReference>
<dbReference type="Gene3D" id="3.40.50.360">
    <property type="match status" value="1"/>
</dbReference>
<dbReference type="HAMAP" id="MF_01216">
    <property type="entry name" value="Azoreductase_type1"/>
    <property type="match status" value="1"/>
</dbReference>
<dbReference type="InterPro" id="IPR003680">
    <property type="entry name" value="Flavodoxin_fold"/>
</dbReference>
<dbReference type="InterPro" id="IPR029039">
    <property type="entry name" value="Flavoprotein-like_sf"/>
</dbReference>
<dbReference type="InterPro" id="IPR050104">
    <property type="entry name" value="FMN-dep_NADH:Q_OxRdtase_AzoR1"/>
</dbReference>
<dbReference type="InterPro" id="IPR023048">
    <property type="entry name" value="NADH:quinone_OxRdtase_FMN_depd"/>
</dbReference>
<dbReference type="PANTHER" id="PTHR43741">
    <property type="entry name" value="FMN-DEPENDENT NADH-AZOREDUCTASE 1"/>
    <property type="match status" value="1"/>
</dbReference>
<dbReference type="PANTHER" id="PTHR43741:SF7">
    <property type="entry name" value="FMN-DEPENDENT NADH:QUINONE OXIDOREDUCTASE"/>
    <property type="match status" value="1"/>
</dbReference>
<dbReference type="Pfam" id="PF02525">
    <property type="entry name" value="Flavodoxin_2"/>
    <property type="match status" value="1"/>
</dbReference>
<dbReference type="SUPFAM" id="SSF52218">
    <property type="entry name" value="Flavoproteins"/>
    <property type="match status" value="1"/>
</dbReference>
<evidence type="ECO:0000255" key="1">
    <source>
        <dbReference type="HAMAP-Rule" id="MF_01216"/>
    </source>
</evidence>
<reference key="1">
    <citation type="journal article" date="2006" name="J. Bacteriol.">
        <title>Pathogenomic sequence analysis of Bacillus cereus and Bacillus thuringiensis isolates closely related to Bacillus anthracis.</title>
        <authorList>
            <person name="Han C.S."/>
            <person name="Xie G."/>
            <person name="Challacombe J.F."/>
            <person name="Altherr M.R."/>
            <person name="Bhotika S.S."/>
            <person name="Bruce D."/>
            <person name="Campbell C.S."/>
            <person name="Campbell M.L."/>
            <person name="Chen J."/>
            <person name="Chertkov O."/>
            <person name="Cleland C."/>
            <person name="Dimitrijevic M."/>
            <person name="Doggett N.A."/>
            <person name="Fawcett J.J."/>
            <person name="Glavina T."/>
            <person name="Goodwin L.A."/>
            <person name="Hill K.K."/>
            <person name="Hitchcock P."/>
            <person name="Jackson P.J."/>
            <person name="Keim P."/>
            <person name="Kewalramani A.R."/>
            <person name="Longmire J."/>
            <person name="Lucas S."/>
            <person name="Malfatti S."/>
            <person name="McMurry K."/>
            <person name="Meincke L.J."/>
            <person name="Misra M."/>
            <person name="Moseman B.L."/>
            <person name="Mundt M."/>
            <person name="Munk A.C."/>
            <person name="Okinaka R.T."/>
            <person name="Parson-Quintana B."/>
            <person name="Reilly L.P."/>
            <person name="Richardson P."/>
            <person name="Robinson D.L."/>
            <person name="Rubin E."/>
            <person name="Saunders E."/>
            <person name="Tapia R."/>
            <person name="Tesmer J.G."/>
            <person name="Thayer N."/>
            <person name="Thompson L.S."/>
            <person name="Tice H."/>
            <person name="Ticknor L.O."/>
            <person name="Wills P.L."/>
            <person name="Brettin T.S."/>
            <person name="Gilna P."/>
        </authorList>
    </citation>
    <scope>NUCLEOTIDE SEQUENCE [LARGE SCALE GENOMIC DNA]</scope>
    <source>
        <strain>ZK / E33L</strain>
    </source>
</reference>
<sequence length="213" mass="24516">MNKTLIINAHPKVDDTSSVSIKVFNHFLESYKEFIPNNETIEQINLYDDVVPMIDKTVLSAWEKQGNGQQLTDEEQKVTERMSEILQQFKSANTYVIVLPLHNFNIPSKLKDYMDNIMIARETFKYTETGSVGLLKDGRRMLVIQASGGIYTNDDWYTDVEYSHKYLKAMFNFLGIEDYQIVRAQGTAVLDPNEVLQNAYREVEEAASRLANK</sequence>